<gene>
    <name type="primary">CRYM</name>
</gene>
<dbReference type="EC" id="1.5.1.25" evidence="2"/>
<dbReference type="EC" id="1.5.1.1" evidence="2"/>
<dbReference type="EMBL" id="M90841">
    <property type="protein sequence ID" value="AAA31606.1"/>
    <property type="molecule type" value="mRNA"/>
</dbReference>
<dbReference type="PIR" id="A46290">
    <property type="entry name" value="A46290"/>
</dbReference>
<dbReference type="SMR" id="Q28488"/>
<dbReference type="GO" id="GO:0005737">
    <property type="term" value="C:cytoplasm"/>
    <property type="evidence" value="ECO:0007669"/>
    <property type="project" value="UniProtKB-SubCell"/>
</dbReference>
<dbReference type="GO" id="GO:0005212">
    <property type="term" value="F:structural constituent of eye lens"/>
    <property type="evidence" value="ECO:0007669"/>
    <property type="project" value="UniProtKB-KW"/>
</dbReference>
<dbReference type="GO" id="GO:0047127">
    <property type="term" value="F:thiomorpholine-carboxylate dehydrogenase activity"/>
    <property type="evidence" value="ECO:0007669"/>
    <property type="project" value="UniProtKB-EC"/>
</dbReference>
<dbReference type="GO" id="GO:0070324">
    <property type="term" value="F:thyroid hormone binding"/>
    <property type="evidence" value="ECO:0007669"/>
    <property type="project" value="TreeGrafter"/>
</dbReference>
<dbReference type="GO" id="GO:0042403">
    <property type="term" value="P:thyroid hormone metabolic process"/>
    <property type="evidence" value="ECO:0007669"/>
    <property type="project" value="TreeGrafter"/>
</dbReference>
<dbReference type="FunFam" id="3.30.1780.10:FF:000001">
    <property type="entry name" value="Ketimine reductase mu-crystallin"/>
    <property type="match status" value="1"/>
</dbReference>
<dbReference type="FunFam" id="3.40.50.720:FF:000241">
    <property type="entry name" value="ketimine reductase mu-crystallin"/>
    <property type="match status" value="1"/>
</dbReference>
<dbReference type="Gene3D" id="3.40.50.720">
    <property type="entry name" value="NAD(P)-binding Rossmann-like Domain"/>
    <property type="match status" value="1"/>
</dbReference>
<dbReference type="Gene3D" id="3.30.1780.10">
    <property type="entry name" value="ornithine cyclodeaminase, domain 1"/>
    <property type="match status" value="1"/>
</dbReference>
<dbReference type="InterPro" id="IPR036291">
    <property type="entry name" value="NAD(P)-bd_dom_sf"/>
</dbReference>
<dbReference type="InterPro" id="IPR003462">
    <property type="entry name" value="ODC_Mu_crystall"/>
</dbReference>
<dbReference type="InterPro" id="IPR023401">
    <property type="entry name" value="ODC_N"/>
</dbReference>
<dbReference type="PANTHER" id="PTHR13812">
    <property type="entry name" value="KETIMINE REDUCTASE MU-CRYSTALLIN"/>
    <property type="match status" value="1"/>
</dbReference>
<dbReference type="PANTHER" id="PTHR13812:SF19">
    <property type="entry name" value="KETIMINE REDUCTASE MU-CRYSTALLIN"/>
    <property type="match status" value="1"/>
</dbReference>
<dbReference type="Pfam" id="PF02423">
    <property type="entry name" value="OCD_Mu_crystall"/>
    <property type="match status" value="1"/>
</dbReference>
<dbReference type="PIRSF" id="PIRSF001439">
    <property type="entry name" value="CryM"/>
    <property type="match status" value="1"/>
</dbReference>
<dbReference type="SUPFAM" id="SSF51735">
    <property type="entry name" value="NAD(P)-binding Rossmann-fold domains"/>
    <property type="match status" value="1"/>
</dbReference>
<organism>
    <name type="scientific">Macropus fuliginosus</name>
    <name type="common">Western gray kangaroo</name>
    <name type="synonym">Kangurus fuliginosus</name>
    <dbReference type="NCBI Taxonomy" id="9316"/>
    <lineage>
        <taxon>Eukaryota</taxon>
        <taxon>Metazoa</taxon>
        <taxon>Chordata</taxon>
        <taxon>Craniata</taxon>
        <taxon>Vertebrata</taxon>
        <taxon>Euteleostomi</taxon>
        <taxon>Mammalia</taxon>
        <taxon>Metatheria</taxon>
        <taxon>Diprotodontia</taxon>
        <taxon>Macropodidae</taxon>
        <taxon>Macropus</taxon>
    </lineage>
</organism>
<sequence length="314" mass="33931">MSWSPAFLRSEDVERYLGSSSILLPALEKALANFSSGSEGGVVQPVRTVIPVAKHQGFLGIMPVYSASEDALTTKLVTFYEGMSPTSTAPSHQTTVLFFDPSNGSLLSIMDGNIITAKRTAAVSAIATKFLKPPSSEVLCILGAGVQAYSHYEIFKEQFSFKEVRIWNRTKKNAEKFAQTVKGDVRVCSSVQEAVTGADVIITVTMATKPILFGEWVKPGAHINAVGASRPDWRELDDEIMKNCVLYVDSREAALKESGDVILSGAEIFAELGEVVKGVKPAHREKTTVFKSLGMAVEDAVAAKLVYDSWSSGK</sequence>
<protein>
    <recommendedName>
        <fullName evidence="2">Ketimine reductase mu-crystallin</fullName>
        <ecNumber evidence="2">1.5.1.25</ecNumber>
    </recommendedName>
    <alternativeName>
        <fullName evidence="2">1-piperideine-2-carboxylate/1-pyrroline-2-carboxylate reductase</fullName>
        <shortName evidence="2">P2C/Pyr2C reductase</shortName>
        <ecNumber evidence="2">1.5.1.1</ecNumber>
    </alternativeName>
    <alternativeName>
        <fullName>CDK108</fullName>
    </alternativeName>
    <alternativeName>
        <fullName evidence="2">NADP-regulated thyroid-hormone-binding protein</fullName>
    </alternativeName>
</protein>
<name>CRYM_MACFL</name>
<evidence type="ECO:0000250" key="1">
    <source>
        <dbReference type="UniProtKB" id="O54983"/>
    </source>
</evidence>
<evidence type="ECO:0000250" key="2">
    <source>
        <dbReference type="UniProtKB" id="Q14894"/>
    </source>
</evidence>
<evidence type="ECO:0000250" key="3">
    <source>
        <dbReference type="UniProtKB" id="Q2KHX6"/>
    </source>
</evidence>
<evidence type="ECO:0000269" key="4">
    <source>
    </source>
</evidence>
<evidence type="ECO:0000305" key="5"/>
<comment type="function">
    <text evidence="2 3">Catalyzes the NAD(P)H-dependent reduction of imine double bonds of a number of cyclic ketimine substrates, including sulfur-containing cyclic ketimines. Under physiological conditions, it efficiently catalyzes delta(1)-piperideine-2-carboxylate (P2C) and delta(1)-pyrroline-2-carboxylate (Pyr2C) reduction, suggesting a central role in lysine and glutamate metabolism. Additional substrates are delta(2)-thiazoline-2-carboxylate (T2C), 3,4-dehydrothiomorpholine-3-carboxylate (AECK), and (R)-lanthionine ketimine (LK) that is reduced at very low rate compared to other substrates (By similarity). Also catalyzes the NAD(P)H-dependent reduction of (S)-cystathionine ketimine (CysK) (By similarity).</text>
</comment>
<comment type="catalytic activity">
    <reaction evidence="2">
        <text>L-pipecolate + NADP(+) = Delta(1)-piperideine-2-carboxylate + NADPH + H(+)</text>
        <dbReference type="Rhea" id="RHEA:12524"/>
        <dbReference type="ChEBI" id="CHEBI:15378"/>
        <dbReference type="ChEBI" id="CHEBI:57783"/>
        <dbReference type="ChEBI" id="CHEBI:58349"/>
        <dbReference type="ChEBI" id="CHEBI:61185"/>
        <dbReference type="ChEBI" id="CHEBI:77631"/>
        <dbReference type="EC" id="1.5.1.1"/>
    </reaction>
    <physiologicalReaction direction="right-to-left" evidence="2">
        <dbReference type="Rhea" id="RHEA:12526"/>
    </physiologicalReaction>
</comment>
<comment type="catalytic activity">
    <reaction evidence="3">
        <text>L-pipecolate + NAD(+) = Delta(1)-piperideine-2-carboxylate + NADH + H(+)</text>
        <dbReference type="Rhea" id="RHEA:30807"/>
        <dbReference type="ChEBI" id="CHEBI:15378"/>
        <dbReference type="ChEBI" id="CHEBI:57540"/>
        <dbReference type="ChEBI" id="CHEBI:57945"/>
        <dbReference type="ChEBI" id="CHEBI:61185"/>
        <dbReference type="ChEBI" id="CHEBI:77631"/>
        <dbReference type="EC" id="1.5.1.1"/>
    </reaction>
    <physiologicalReaction direction="right-to-left" evidence="3">
        <dbReference type="Rhea" id="RHEA:30809"/>
    </physiologicalReaction>
</comment>
<comment type="catalytic activity">
    <reaction evidence="2">
        <text>L-proline + NADP(+) = 1-pyrroline-2-carboxylate + NADPH + H(+)</text>
        <dbReference type="Rhea" id="RHEA:20317"/>
        <dbReference type="ChEBI" id="CHEBI:15378"/>
        <dbReference type="ChEBI" id="CHEBI:39785"/>
        <dbReference type="ChEBI" id="CHEBI:57783"/>
        <dbReference type="ChEBI" id="CHEBI:58349"/>
        <dbReference type="ChEBI" id="CHEBI:60039"/>
        <dbReference type="EC" id="1.5.1.1"/>
    </reaction>
    <physiologicalReaction direction="right-to-left" evidence="2">
        <dbReference type="Rhea" id="RHEA:20319"/>
    </physiologicalReaction>
</comment>
<comment type="catalytic activity">
    <reaction evidence="2">
        <text>L-proline + NAD(+) = 1-pyrroline-2-carboxylate + NADH + H(+)</text>
        <dbReference type="Rhea" id="RHEA:20321"/>
        <dbReference type="ChEBI" id="CHEBI:15378"/>
        <dbReference type="ChEBI" id="CHEBI:39785"/>
        <dbReference type="ChEBI" id="CHEBI:57540"/>
        <dbReference type="ChEBI" id="CHEBI:57945"/>
        <dbReference type="ChEBI" id="CHEBI:60039"/>
        <dbReference type="EC" id="1.5.1.1"/>
    </reaction>
    <physiologicalReaction direction="right-to-left" evidence="2">
        <dbReference type="Rhea" id="RHEA:20323"/>
    </physiologicalReaction>
</comment>
<comment type="catalytic activity">
    <reaction evidence="2">
        <text>(3R)-1,4-thiomorpholine-3-carboxylate + NAD(+) = 3,4-dehydrothiomorpholine-3-carboxylate + NADH + 2 H(+)</text>
        <dbReference type="Rhea" id="RHEA:12504"/>
        <dbReference type="ChEBI" id="CHEBI:15378"/>
        <dbReference type="ChEBI" id="CHEBI:57540"/>
        <dbReference type="ChEBI" id="CHEBI:57945"/>
        <dbReference type="ChEBI" id="CHEBI:58517"/>
        <dbReference type="ChEBI" id="CHEBI:176873"/>
        <dbReference type="EC" id="1.5.1.25"/>
    </reaction>
    <physiologicalReaction direction="right-to-left" evidence="2">
        <dbReference type="Rhea" id="RHEA:12506"/>
    </physiologicalReaction>
</comment>
<comment type="catalytic activity">
    <reaction evidence="2">
        <text>(3R)-1,4-thiomorpholine-3-carboxylate + NADP(+) = 3,4-dehydrothiomorpholine-3-carboxylate + NADPH + 2 H(+)</text>
        <dbReference type="Rhea" id="RHEA:12500"/>
        <dbReference type="ChEBI" id="CHEBI:15378"/>
        <dbReference type="ChEBI" id="CHEBI:57783"/>
        <dbReference type="ChEBI" id="CHEBI:58349"/>
        <dbReference type="ChEBI" id="CHEBI:58517"/>
        <dbReference type="ChEBI" id="CHEBI:176873"/>
        <dbReference type="EC" id="1.5.1.25"/>
    </reaction>
    <physiologicalReaction direction="right-to-left" evidence="2">
        <dbReference type="Rhea" id="RHEA:12502"/>
    </physiologicalReaction>
</comment>
<comment type="catalytic activity">
    <reaction evidence="3">
        <text>(S)-cystathionine ketimine + NADH + 2 H(+) = (3R,5S)-2,3,5,6,7-pentahydro-1,4-thiazepine-3,5-dicarboxylate + NAD(+)</text>
        <dbReference type="Rhea" id="RHEA:68032"/>
        <dbReference type="ChEBI" id="CHEBI:15378"/>
        <dbReference type="ChEBI" id="CHEBI:57540"/>
        <dbReference type="ChEBI" id="CHEBI:57945"/>
        <dbReference type="ChEBI" id="CHEBI:176808"/>
        <dbReference type="ChEBI" id="CHEBI:176810"/>
    </reaction>
    <physiologicalReaction direction="left-to-right" evidence="3">
        <dbReference type="Rhea" id="RHEA:68033"/>
    </physiologicalReaction>
</comment>
<comment type="catalytic activity">
    <reaction evidence="3">
        <text>(S)-cystathionine ketimine + NADPH + 2 H(+) = (3R,5S)-2,3,5,6,7-pentahydro-1,4-thiazepine-3,5-dicarboxylate + NADP(+)</text>
        <dbReference type="Rhea" id="RHEA:68036"/>
        <dbReference type="ChEBI" id="CHEBI:15378"/>
        <dbReference type="ChEBI" id="CHEBI:57783"/>
        <dbReference type="ChEBI" id="CHEBI:58349"/>
        <dbReference type="ChEBI" id="CHEBI:176808"/>
        <dbReference type="ChEBI" id="CHEBI:176810"/>
    </reaction>
    <physiologicalReaction direction="left-to-right" evidence="3">
        <dbReference type="Rhea" id="RHEA:68037"/>
    </physiologicalReaction>
</comment>
<comment type="catalytic activity">
    <reaction evidence="2">
        <text>(R)-lanthionine ketimine + NADPH + 2 H(+) = (3R,5R)-1,4-thiomorpholine-3,5-dicarboxylate + NADP(+)</text>
        <dbReference type="Rhea" id="RHEA:68040"/>
        <dbReference type="ChEBI" id="CHEBI:15378"/>
        <dbReference type="ChEBI" id="CHEBI:57783"/>
        <dbReference type="ChEBI" id="CHEBI:58349"/>
        <dbReference type="ChEBI" id="CHEBI:176891"/>
        <dbReference type="ChEBI" id="CHEBI:176892"/>
    </reaction>
    <physiologicalReaction direction="left-to-right" evidence="2">
        <dbReference type="Rhea" id="RHEA:68041"/>
    </physiologicalReaction>
</comment>
<comment type="catalytic activity">
    <reaction evidence="2">
        <text>Delta(2)-thiazoline-2-carboxylate + NADPH + 2 H(+) = L-thiazolidine-2-carboxylate + NADP(+)</text>
        <dbReference type="Rhea" id="RHEA:68072"/>
        <dbReference type="ChEBI" id="CHEBI:15378"/>
        <dbReference type="ChEBI" id="CHEBI:57783"/>
        <dbReference type="ChEBI" id="CHEBI:58349"/>
        <dbReference type="ChEBI" id="CHEBI:176895"/>
        <dbReference type="ChEBI" id="CHEBI:176896"/>
    </reaction>
    <physiologicalReaction direction="left-to-right" evidence="2">
        <dbReference type="Rhea" id="RHEA:68073"/>
    </physiologicalReaction>
</comment>
<comment type="subunit">
    <text evidence="2">Homodimer (By similarity). Binds the thyroid hormone triiodothyronine (T3); T3 binding inhibits enzymatic activity.</text>
</comment>
<comment type="subcellular location">
    <subcellularLocation>
        <location evidence="2">Cytoplasm</location>
    </subcellularLocation>
</comment>
<comment type="tissue specificity">
    <text evidence="4">Expressed at high abundance in lens, but outside the lens it is preferentially expressed in neural tissues, retina and brain.</text>
</comment>
<comment type="similarity">
    <text evidence="5">Belongs to the ornithine cyclodeaminase/mu-crystallin family.</text>
</comment>
<reference key="1">
    <citation type="journal article" date="1992" name="Proc. Natl. Acad. Sci. U.S.A.">
        <title>Mu-crystallin is a mammalian homologue of Agrobacterium ornithine cyclodeaminase and is expressed in human retina.</title>
        <authorList>
            <person name="Kim R.Y."/>
            <person name="Gasser R."/>
            <person name="Wistow G.J."/>
        </authorList>
    </citation>
    <scope>NUCLEOTIDE SEQUENCE [MRNA]</scope>
    <scope>TISSUE SPECIFICITY</scope>
</reference>
<accession>Q28488</accession>
<keyword id="KW-0963">Cytoplasm</keyword>
<keyword id="KW-0273">Eye lens protein</keyword>
<keyword id="KW-0520">NAD</keyword>
<keyword id="KW-0521">NADP</keyword>
<keyword id="KW-0560">Oxidoreductase</keyword>
<proteinExistence type="evidence at transcript level"/>
<feature type="chain" id="PRO_0000200677" description="Ketimine reductase mu-crystallin">
    <location>
        <begin position="1"/>
        <end position="314"/>
    </location>
</feature>
<feature type="binding site" evidence="1">
    <location>
        <position position="47"/>
    </location>
    <ligand>
        <name>3,3',5-triiodo-L-thyronine</name>
        <dbReference type="ChEBI" id="CHEBI:533015"/>
    </ligand>
</feature>
<feature type="binding site" evidence="1">
    <location>
        <position position="91"/>
    </location>
    <ligand>
        <name>NADPH</name>
        <dbReference type="ChEBI" id="CHEBI:57783"/>
    </ligand>
</feature>
<feature type="binding site" evidence="1">
    <location>
        <position position="92"/>
    </location>
    <ligand>
        <name>NADPH</name>
        <dbReference type="ChEBI" id="CHEBI:57783"/>
    </ligand>
</feature>
<feature type="binding site" evidence="1">
    <location>
        <position position="119"/>
    </location>
    <ligand>
        <name>NADPH</name>
        <dbReference type="ChEBI" id="CHEBI:57783"/>
    </ligand>
</feature>
<feature type="binding site" evidence="1">
    <location>
        <position position="144"/>
    </location>
    <ligand>
        <name>NADPH</name>
        <dbReference type="ChEBI" id="CHEBI:57783"/>
    </ligand>
</feature>
<feature type="binding site" evidence="1">
    <location>
        <position position="146"/>
    </location>
    <ligand>
        <name>NADPH</name>
        <dbReference type="ChEBI" id="CHEBI:57783"/>
    </ligand>
</feature>
<feature type="binding site" evidence="1">
    <location>
        <position position="147"/>
    </location>
    <ligand>
        <name>NADPH</name>
        <dbReference type="ChEBI" id="CHEBI:57783"/>
    </ligand>
</feature>
<feature type="binding site" evidence="1">
    <location>
        <position position="168"/>
    </location>
    <ligand>
        <name>NADPH</name>
        <dbReference type="ChEBI" id="CHEBI:57783"/>
    </ligand>
</feature>
<feature type="binding site" evidence="1">
    <location>
        <position position="169"/>
    </location>
    <ligand>
        <name>NADPH</name>
        <dbReference type="ChEBI" id="CHEBI:57783"/>
    </ligand>
</feature>
<feature type="binding site" evidence="1">
    <location>
        <position position="170"/>
    </location>
    <ligand>
        <name>NADPH</name>
        <dbReference type="ChEBI" id="CHEBI:57783"/>
    </ligand>
</feature>
<feature type="binding site" evidence="1">
    <location>
        <position position="173"/>
    </location>
    <ligand>
        <name>NADPH</name>
        <dbReference type="ChEBI" id="CHEBI:57783"/>
    </ligand>
</feature>
<feature type="binding site" evidence="1">
    <location>
        <position position="205"/>
    </location>
    <ligand>
        <name>NADPH</name>
        <dbReference type="ChEBI" id="CHEBI:57783"/>
    </ligand>
</feature>
<feature type="binding site" evidence="1">
    <location>
        <position position="206"/>
    </location>
    <ligand>
        <name>NADPH</name>
        <dbReference type="ChEBI" id="CHEBI:57783"/>
    </ligand>
</feature>
<feature type="binding site" evidence="1">
    <location>
        <position position="226"/>
    </location>
    <ligand>
        <name>NADPH</name>
        <dbReference type="ChEBI" id="CHEBI:57783"/>
    </ligand>
</feature>
<feature type="binding site" evidence="1">
    <location>
        <position position="257"/>
    </location>
    <ligand>
        <name>3,3',5-triiodo-L-thyronine</name>
        <dbReference type="ChEBI" id="CHEBI:533015"/>
    </ligand>
</feature>
<feature type="binding site" evidence="1">
    <location>
        <position position="292"/>
    </location>
    <ligand>
        <name>NADPH</name>
        <dbReference type="ChEBI" id="CHEBI:57783"/>
    </ligand>
</feature>